<sequence>MSITKDQIIEAVAAMSVMDVVELISAMEEKFGVSAAAAVAVAAGPVEAAEEKTEFDVILKAAGANKVAVIKAVRGATGLGLKEAKDLVESAPAALKEGVSKDDAEALKKALEEAGAEVEVK</sequence>
<keyword id="KW-0687">Ribonucleoprotein</keyword>
<keyword id="KW-0689">Ribosomal protein</keyword>
<proteinExistence type="inferred from homology"/>
<evidence type="ECO:0000255" key="1">
    <source>
        <dbReference type="HAMAP-Rule" id="MF_00368"/>
    </source>
</evidence>
<evidence type="ECO:0000305" key="2"/>
<name>RL7_ECOSE</name>
<dbReference type="EMBL" id="AP009240">
    <property type="protein sequence ID" value="BAG79797.1"/>
    <property type="molecule type" value="Genomic_DNA"/>
</dbReference>
<dbReference type="RefSeq" id="WP_000028878.1">
    <property type="nucleotide sequence ID" value="NC_011415.1"/>
</dbReference>
<dbReference type="SMR" id="B6I5J6"/>
<dbReference type="GeneID" id="86944525"/>
<dbReference type="KEGG" id="ecy:ECSE_4273"/>
<dbReference type="HOGENOM" id="CLU_086499_3_2_6"/>
<dbReference type="Proteomes" id="UP000008199">
    <property type="component" value="Chromosome"/>
</dbReference>
<dbReference type="GO" id="GO:0022625">
    <property type="term" value="C:cytosolic large ribosomal subunit"/>
    <property type="evidence" value="ECO:0007669"/>
    <property type="project" value="TreeGrafter"/>
</dbReference>
<dbReference type="GO" id="GO:0003729">
    <property type="term" value="F:mRNA binding"/>
    <property type="evidence" value="ECO:0007669"/>
    <property type="project" value="TreeGrafter"/>
</dbReference>
<dbReference type="GO" id="GO:0003735">
    <property type="term" value="F:structural constituent of ribosome"/>
    <property type="evidence" value="ECO:0007669"/>
    <property type="project" value="InterPro"/>
</dbReference>
<dbReference type="GO" id="GO:0006412">
    <property type="term" value="P:translation"/>
    <property type="evidence" value="ECO:0007669"/>
    <property type="project" value="UniProtKB-UniRule"/>
</dbReference>
<dbReference type="CDD" id="cd00387">
    <property type="entry name" value="Ribosomal_L7_L12"/>
    <property type="match status" value="1"/>
</dbReference>
<dbReference type="FunFam" id="1.20.5.710:FF:000001">
    <property type="entry name" value="50S ribosomal protein L7/L12"/>
    <property type="match status" value="1"/>
</dbReference>
<dbReference type="FunFam" id="3.30.1390.10:FF:000001">
    <property type="entry name" value="50S ribosomal protein L7/L12"/>
    <property type="match status" value="1"/>
</dbReference>
<dbReference type="Gene3D" id="3.30.1390.10">
    <property type="match status" value="1"/>
</dbReference>
<dbReference type="Gene3D" id="1.20.5.710">
    <property type="entry name" value="Single helix bin"/>
    <property type="match status" value="1"/>
</dbReference>
<dbReference type="HAMAP" id="MF_00368">
    <property type="entry name" value="Ribosomal_bL12"/>
    <property type="match status" value="1"/>
</dbReference>
<dbReference type="InterPro" id="IPR000206">
    <property type="entry name" value="Ribosomal_bL12"/>
</dbReference>
<dbReference type="InterPro" id="IPR013823">
    <property type="entry name" value="Ribosomal_bL12_C"/>
</dbReference>
<dbReference type="InterPro" id="IPR014719">
    <property type="entry name" value="Ribosomal_bL12_C/ClpS-like"/>
</dbReference>
<dbReference type="InterPro" id="IPR008932">
    <property type="entry name" value="Ribosomal_bL12_oligo"/>
</dbReference>
<dbReference type="InterPro" id="IPR036235">
    <property type="entry name" value="Ribosomal_bL12_oligo_N_sf"/>
</dbReference>
<dbReference type="NCBIfam" id="TIGR00855">
    <property type="entry name" value="L12"/>
    <property type="match status" value="1"/>
</dbReference>
<dbReference type="PANTHER" id="PTHR45987">
    <property type="entry name" value="39S RIBOSOMAL PROTEIN L12"/>
    <property type="match status" value="1"/>
</dbReference>
<dbReference type="PANTHER" id="PTHR45987:SF4">
    <property type="entry name" value="LARGE RIBOSOMAL SUBUNIT PROTEIN BL12M"/>
    <property type="match status" value="1"/>
</dbReference>
<dbReference type="Pfam" id="PF00542">
    <property type="entry name" value="Ribosomal_L12"/>
    <property type="match status" value="1"/>
</dbReference>
<dbReference type="Pfam" id="PF16320">
    <property type="entry name" value="Ribosomal_L12_N"/>
    <property type="match status" value="1"/>
</dbReference>
<dbReference type="SUPFAM" id="SSF54736">
    <property type="entry name" value="ClpS-like"/>
    <property type="match status" value="1"/>
</dbReference>
<dbReference type="SUPFAM" id="SSF48300">
    <property type="entry name" value="Ribosomal protein L7/12, oligomerisation (N-terminal) domain"/>
    <property type="match status" value="1"/>
</dbReference>
<comment type="function">
    <text evidence="1">Forms part of the ribosomal stalk which helps the ribosome interact with GTP-bound translation factors. Is thus essential for accurate translation.</text>
</comment>
<comment type="subunit">
    <text evidence="1">Homodimer. Part of the ribosomal stalk of the 50S ribosomal subunit. Forms a multimeric L10(L12)X complex, where L10 forms an elongated spine to which 2 to 4 L12 dimers bind in a sequential fashion. Binds GTP-bound translation factors.</text>
</comment>
<comment type="similarity">
    <text evidence="1">Belongs to the bacterial ribosomal protein bL12 family.</text>
</comment>
<organism>
    <name type="scientific">Escherichia coli (strain SE11)</name>
    <dbReference type="NCBI Taxonomy" id="409438"/>
    <lineage>
        <taxon>Bacteria</taxon>
        <taxon>Pseudomonadati</taxon>
        <taxon>Pseudomonadota</taxon>
        <taxon>Gammaproteobacteria</taxon>
        <taxon>Enterobacterales</taxon>
        <taxon>Enterobacteriaceae</taxon>
        <taxon>Escherichia</taxon>
    </lineage>
</organism>
<gene>
    <name evidence="1" type="primary">rplL</name>
    <name type="ordered locus">ECSE_4273</name>
</gene>
<feature type="chain" id="PRO_1000121435" description="Large ribosomal subunit protein bL12">
    <location>
        <begin position="1"/>
        <end position="121"/>
    </location>
</feature>
<accession>B6I5J6</accession>
<protein>
    <recommendedName>
        <fullName evidence="1">Large ribosomal subunit protein bL12</fullName>
    </recommendedName>
    <alternativeName>
        <fullName evidence="2">50S ribosomal protein L7/L12</fullName>
    </alternativeName>
</protein>
<reference key="1">
    <citation type="journal article" date="2008" name="DNA Res.">
        <title>Complete genome sequence and comparative analysis of the wild-type commensal Escherichia coli strain SE11 isolated from a healthy adult.</title>
        <authorList>
            <person name="Oshima K."/>
            <person name="Toh H."/>
            <person name="Ogura Y."/>
            <person name="Sasamoto H."/>
            <person name="Morita H."/>
            <person name="Park S.-H."/>
            <person name="Ooka T."/>
            <person name="Iyoda S."/>
            <person name="Taylor T.D."/>
            <person name="Hayashi T."/>
            <person name="Itoh K."/>
            <person name="Hattori M."/>
        </authorList>
    </citation>
    <scope>NUCLEOTIDE SEQUENCE [LARGE SCALE GENOMIC DNA]</scope>
    <source>
        <strain>SE11</strain>
    </source>
</reference>